<organism>
    <name type="scientific">Borreliella burgdorferi (strain ATCC 35210 / DSM 4680 / CIP 102532 / B31)</name>
    <name type="common">Borrelia burgdorferi</name>
    <dbReference type="NCBI Taxonomy" id="224326"/>
    <lineage>
        <taxon>Bacteria</taxon>
        <taxon>Pseudomonadati</taxon>
        <taxon>Spirochaetota</taxon>
        <taxon>Spirochaetia</taxon>
        <taxon>Spirochaetales</taxon>
        <taxon>Borreliaceae</taxon>
        <taxon>Borreliella</taxon>
    </lineage>
</organism>
<comment type="cofactor">
    <cofactor evidence="1">
        <name>Zn(2+)</name>
        <dbReference type="ChEBI" id="CHEBI:29105"/>
    </cofactor>
    <text evidence="1">Binds 1 zinc ion.</text>
</comment>
<comment type="similarity">
    <text evidence="2">Belongs to the peptidase M3B family.</text>
</comment>
<proteinExistence type="inferred from homology"/>
<feature type="chain" id="PRO_0000078166" description="Oligoendopeptidase F homolog">
    <location>
        <begin position="1"/>
        <end position="590"/>
    </location>
</feature>
<feature type="active site" evidence="1">
    <location>
        <position position="382"/>
    </location>
</feature>
<feature type="binding site" evidence="1">
    <location>
        <position position="381"/>
    </location>
    <ligand>
        <name>Zn(2+)</name>
        <dbReference type="ChEBI" id="CHEBI:29105"/>
        <note>catalytic</note>
    </ligand>
</feature>
<feature type="binding site" evidence="1">
    <location>
        <position position="385"/>
    </location>
    <ligand>
        <name>Zn(2+)</name>
        <dbReference type="ChEBI" id="CHEBI:29105"/>
        <note>catalytic</note>
    </ligand>
</feature>
<feature type="binding site" evidence="1">
    <location>
        <position position="388"/>
    </location>
    <ligand>
        <name>Zn(2+)</name>
        <dbReference type="ChEBI" id="CHEBI:29105"/>
        <note>catalytic</note>
    </ligand>
</feature>
<reference key="1">
    <citation type="journal article" date="1997" name="Nature">
        <title>Genomic sequence of a Lyme disease spirochaete, Borrelia burgdorferi.</title>
        <authorList>
            <person name="Fraser C.M."/>
            <person name="Casjens S."/>
            <person name="Huang W.M."/>
            <person name="Sutton G.G."/>
            <person name="Clayton R.A."/>
            <person name="Lathigra R."/>
            <person name="White O."/>
            <person name="Ketchum K.A."/>
            <person name="Dodson R.J."/>
            <person name="Hickey E.K."/>
            <person name="Gwinn M.L."/>
            <person name="Dougherty B.A."/>
            <person name="Tomb J.-F."/>
            <person name="Fleischmann R.D."/>
            <person name="Richardson D.L."/>
            <person name="Peterson J.D."/>
            <person name="Kerlavage A.R."/>
            <person name="Quackenbush J."/>
            <person name="Salzberg S.L."/>
            <person name="Hanson M."/>
            <person name="van Vugt R."/>
            <person name="Palmer N."/>
            <person name="Adams M.D."/>
            <person name="Gocayne J.D."/>
            <person name="Weidman J.F."/>
            <person name="Utterback T.R."/>
            <person name="Watthey L."/>
            <person name="McDonald L.A."/>
            <person name="Artiach P."/>
            <person name="Bowman C."/>
            <person name="Garland S.A."/>
            <person name="Fujii C."/>
            <person name="Cotton M.D."/>
            <person name="Horst K."/>
            <person name="Roberts K.M."/>
            <person name="Hatch B."/>
            <person name="Smith H.O."/>
            <person name="Venter J.C."/>
        </authorList>
    </citation>
    <scope>NUCLEOTIDE SEQUENCE [LARGE SCALE GENOMIC DNA]</scope>
    <source>
        <strain>ATCC 35210 / DSM 4680 / CIP 102532 / B31</strain>
    </source>
</reference>
<evidence type="ECO:0000250" key="1"/>
<evidence type="ECO:0000305" key="2"/>
<name>PEPF_BORBU</name>
<protein>
    <recommendedName>
        <fullName>Oligoendopeptidase F homolog</fullName>
        <ecNumber>3.4.24.-</ecNumber>
    </recommendedName>
</protein>
<sequence>MINRNEINENDKWDLSFLFANEEEYVKTINAIEIKTKEFKKYEKLELNFDLFKETLNKYYEIMEDLEKVSYYAMLQLETDVTNKDSNKIYSICVNLATKVSNTTSYFMPKILKTDEKKIQAWINDPELKDKKIAIEKILREKKHILSEQEEKILANYTPLYTSYQSIFSALTNADMEFGEINKHPLTNSTYTLFLQNEDQKIRKEAFLRFYQKYKNNENTLANLIISDFKKNHFIAKTRRFQNTFSMQLFSNNIDKKVYTNLIETVNENLPVLNDYYEFRKKVLNQEYLYHYDVYVPLTKGIIFKNSFEDACEKILKSLEVLGNEYTKILRNGLLKERWVDKYENTGKRSGAFSAGSYNGKPYILLNYKDESIRDMFTLAHEAGHSMHSYFSIKNNPFPHYNYSIFEAEIASIINEQILAEYLLKNETDTNKIKYIKLTQIDDMISTFFRQTMFAEFEYIIHEMISKEEPVVKETLTETYMNLLKKYFGPSLKFDELSPLECLRIPHFYSPFYVYQYATGIAAALSIYKGIKENKKDAVENYIKFLKTGGSKYPLDSLNITGVDLTKKATIENTINIFKCRLEEIKKIFQ</sequence>
<gene>
    <name type="primary">pepF</name>
    <name type="ordered locus">BB_0248</name>
</gene>
<accession>O51264</accession>
<dbReference type="EC" id="3.4.24.-"/>
<dbReference type="EMBL" id="AE000783">
    <property type="protein sequence ID" value="AAB91498.1"/>
    <property type="molecule type" value="Genomic_DNA"/>
</dbReference>
<dbReference type="PIR" id="H70130">
    <property type="entry name" value="H70130"/>
</dbReference>
<dbReference type="RefSeq" id="NP_212382.1">
    <property type="nucleotide sequence ID" value="NC_001318.1"/>
</dbReference>
<dbReference type="RefSeq" id="WP_010889716.1">
    <property type="nucleotide sequence ID" value="NC_001318.1"/>
</dbReference>
<dbReference type="SMR" id="O51264"/>
<dbReference type="STRING" id="224326.BB_0248"/>
<dbReference type="PaxDb" id="224326-BB_0248"/>
<dbReference type="EnsemblBacteria" id="AAB91498">
    <property type="protein sequence ID" value="AAB91498"/>
    <property type="gene ID" value="BB_0248"/>
</dbReference>
<dbReference type="KEGG" id="bbu:BB_0248"/>
<dbReference type="PATRIC" id="fig|224326.49.peg.647"/>
<dbReference type="HOGENOM" id="CLU_021290_2_0_12"/>
<dbReference type="OrthoDB" id="9766487at2"/>
<dbReference type="Proteomes" id="UP000001807">
    <property type="component" value="Chromosome"/>
</dbReference>
<dbReference type="GO" id="GO:0005829">
    <property type="term" value="C:cytosol"/>
    <property type="evidence" value="ECO:0000314"/>
    <property type="project" value="CAFA"/>
</dbReference>
<dbReference type="GO" id="GO:0046872">
    <property type="term" value="F:metal ion binding"/>
    <property type="evidence" value="ECO:0007669"/>
    <property type="project" value="UniProtKB-KW"/>
</dbReference>
<dbReference type="GO" id="GO:0004222">
    <property type="term" value="F:metalloendopeptidase activity"/>
    <property type="evidence" value="ECO:0007669"/>
    <property type="project" value="InterPro"/>
</dbReference>
<dbReference type="GO" id="GO:0006518">
    <property type="term" value="P:peptide metabolic process"/>
    <property type="evidence" value="ECO:0007669"/>
    <property type="project" value="TreeGrafter"/>
</dbReference>
<dbReference type="GO" id="GO:0006508">
    <property type="term" value="P:proteolysis"/>
    <property type="evidence" value="ECO:0007669"/>
    <property type="project" value="UniProtKB-KW"/>
</dbReference>
<dbReference type="CDD" id="cd09608">
    <property type="entry name" value="M3B_PepF"/>
    <property type="match status" value="1"/>
</dbReference>
<dbReference type="Gene3D" id="1.10.1370.20">
    <property type="entry name" value="Oligoendopeptidase f, C-terminal domain"/>
    <property type="match status" value="1"/>
</dbReference>
<dbReference type="Gene3D" id="1.20.140.70">
    <property type="entry name" value="Oligopeptidase f, N-terminal domain"/>
    <property type="match status" value="1"/>
</dbReference>
<dbReference type="Gene3D" id="1.10.287.830">
    <property type="entry name" value="putative peptidase helix hairpin domain like"/>
    <property type="match status" value="1"/>
</dbReference>
<dbReference type="InterPro" id="IPR013647">
    <property type="entry name" value="OligopepF_N_dom"/>
</dbReference>
<dbReference type="InterPro" id="IPR042088">
    <property type="entry name" value="OligoPept_F_C"/>
</dbReference>
<dbReference type="InterPro" id="IPR045090">
    <property type="entry name" value="Pept_M3A_M3B"/>
</dbReference>
<dbReference type="InterPro" id="IPR001567">
    <property type="entry name" value="Pept_M3A_M3B_dom"/>
</dbReference>
<dbReference type="InterPro" id="IPR004438">
    <property type="entry name" value="Peptidase_M3B"/>
</dbReference>
<dbReference type="NCBIfam" id="TIGR00181">
    <property type="entry name" value="pepF"/>
    <property type="match status" value="1"/>
</dbReference>
<dbReference type="PANTHER" id="PTHR11804">
    <property type="entry name" value="PROTEASE M3 THIMET OLIGOPEPTIDASE-RELATED"/>
    <property type="match status" value="1"/>
</dbReference>
<dbReference type="PANTHER" id="PTHR11804:SF84">
    <property type="entry name" value="SACCHAROLYSIN"/>
    <property type="match status" value="1"/>
</dbReference>
<dbReference type="Pfam" id="PF01432">
    <property type="entry name" value="Peptidase_M3"/>
    <property type="match status" value="1"/>
</dbReference>
<dbReference type="Pfam" id="PF08439">
    <property type="entry name" value="Peptidase_M3_N"/>
    <property type="match status" value="1"/>
</dbReference>
<dbReference type="SUPFAM" id="SSF55486">
    <property type="entry name" value="Metalloproteases ('zincins'), catalytic domain"/>
    <property type="match status" value="1"/>
</dbReference>
<keyword id="KW-0378">Hydrolase</keyword>
<keyword id="KW-0479">Metal-binding</keyword>
<keyword id="KW-0482">Metalloprotease</keyword>
<keyword id="KW-0645">Protease</keyword>
<keyword id="KW-1185">Reference proteome</keyword>
<keyword id="KW-0862">Zinc</keyword>